<keyword id="KW-0066">ATP synthesis</keyword>
<keyword id="KW-1003">Cell membrane</keyword>
<keyword id="KW-0138">CF(0)</keyword>
<keyword id="KW-0375">Hydrogen ion transport</keyword>
<keyword id="KW-0406">Ion transport</keyword>
<keyword id="KW-0446">Lipid-binding</keyword>
<keyword id="KW-0472">Membrane</keyword>
<keyword id="KW-1185">Reference proteome</keyword>
<keyword id="KW-0812">Transmembrane</keyword>
<keyword id="KW-1133">Transmembrane helix</keyword>
<keyword id="KW-0813">Transport</keyword>
<organism>
    <name type="scientific">Acholeplasma laidlawii (strain PG-8A)</name>
    <dbReference type="NCBI Taxonomy" id="441768"/>
    <lineage>
        <taxon>Bacteria</taxon>
        <taxon>Bacillati</taxon>
        <taxon>Mycoplasmatota</taxon>
        <taxon>Mollicutes</taxon>
        <taxon>Acholeplasmatales</taxon>
        <taxon>Acholeplasmataceae</taxon>
        <taxon>Acholeplasma</taxon>
    </lineage>
</organism>
<sequence>MNTFFQIMTQTEFFATGLAYLGAGISILAAGLAGIGQGLAAARAVEAVGRQPEASGKITVTMILGQAMVETSGIYALIIAFILSSK</sequence>
<dbReference type="EMBL" id="CP000896">
    <property type="protein sequence ID" value="ABX81597.1"/>
    <property type="molecule type" value="Genomic_DNA"/>
</dbReference>
<dbReference type="RefSeq" id="WP_012242928.1">
    <property type="nucleotide sequence ID" value="NC_010163.1"/>
</dbReference>
<dbReference type="SMR" id="A9NGW7"/>
<dbReference type="STRING" id="441768.ACL_0987"/>
<dbReference type="GeneID" id="41339133"/>
<dbReference type="KEGG" id="acl:ACL_0987"/>
<dbReference type="eggNOG" id="COG0636">
    <property type="taxonomic scope" value="Bacteria"/>
</dbReference>
<dbReference type="HOGENOM" id="CLU_148047_2_1_14"/>
<dbReference type="OrthoDB" id="9810379at2"/>
<dbReference type="Proteomes" id="UP000008558">
    <property type="component" value="Chromosome"/>
</dbReference>
<dbReference type="GO" id="GO:0005886">
    <property type="term" value="C:plasma membrane"/>
    <property type="evidence" value="ECO:0007669"/>
    <property type="project" value="UniProtKB-SubCell"/>
</dbReference>
<dbReference type="GO" id="GO:0045259">
    <property type="term" value="C:proton-transporting ATP synthase complex"/>
    <property type="evidence" value="ECO:0007669"/>
    <property type="project" value="UniProtKB-KW"/>
</dbReference>
<dbReference type="GO" id="GO:0033177">
    <property type="term" value="C:proton-transporting two-sector ATPase complex, proton-transporting domain"/>
    <property type="evidence" value="ECO:0007669"/>
    <property type="project" value="InterPro"/>
</dbReference>
<dbReference type="GO" id="GO:0008289">
    <property type="term" value="F:lipid binding"/>
    <property type="evidence" value="ECO:0007669"/>
    <property type="project" value="UniProtKB-KW"/>
</dbReference>
<dbReference type="GO" id="GO:0046933">
    <property type="term" value="F:proton-transporting ATP synthase activity, rotational mechanism"/>
    <property type="evidence" value="ECO:0007669"/>
    <property type="project" value="UniProtKB-UniRule"/>
</dbReference>
<dbReference type="CDD" id="cd18184">
    <property type="entry name" value="ATP-synt_Fo_c_NaATPase"/>
    <property type="match status" value="1"/>
</dbReference>
<dbReference type="Gene3D" id="1.20.120.610">
    <property type="entry name" value="lithium bound rotor ring of v- atpase"/>
    <property type="match status" value="1"/>
</dbReference>
<dbReference type="HAMAP" id="MF_01396">
    <property type="entry name" value="ATP_synth_c_bact"/>
    <property type="match status" value="1"/>
</dbReference>
<dbReference type="InterPro" id="IPR005953">
    <property type="entry name" value="ATP_synth_csu_bac/chlpt"/>
</dbReference>
<dbReference type="InterPro" id="IPR000454">
    <property type="entry name" value="ATP_synth_F0_csu"/>
</dbReference>
<dbReference type="InterPro" id="IPR020537">
    <property type="entry name" value="ATP_synth_F0_csu_DDCD_BS"/>
</dbReference>
<dbReference type="InterPro" id="IPR002379">
    <property type="entry name" value="ATPase_proteolipid_c-like_dom"/>
</dbReference>
<dbReference type="InterPro" id="IPR035921">
    <property type="entry name" value="F/V-ATP_Csub_sf"/>
</dbReference>
<dbReference type="NCBIfam" id="TIGR01260">
    <property type="entry name" value="ATP_synt_c"/>
    <property type="match status" value="1"/>
</dbReference>
<dbReference type="Pfam" id="PF00137">
    <property type="entry name" value="ATP-synt_C"/>
    <property type="match status" value="1"/>
</dbReference>
<dbReference type="PRINTS" id="PR00124">
    <property type="entry name" value="ATPASEC"/>
</dbReference>
<dbReference type="SUPFAM" id="SSF81333">
    <property type="entry name" value="F1F0 ATP synthase subunit C"/>
    <property type="match status" value="1"/>
</dbReference>
<dbReference type="PROSITE" id="PS00605">
    <property type="entry name" value="ATPASE_C"/>
    <property type="match status" value="1"/>
</dbReference>
<reference key="1">
    <citation type="journal article" date="2011" name="J. Bacteriol.">
        <title>Complete genome and proteome of Acholeplasma laidlawii.</title>
        <authorList>
            <person name="Lazarev V.N."/>
            <person name="Levitskii S.A."/>
            <person name="Basovskii Y.I."/>
            <person name="Chukin M.M."/>
            <person name="Akopian T.A."/>
            <person name="Vereshchagin V.V."/>
            <person name="Kostrjukova E.S."/>
            <person name="Kovaleva G.Y."/>
            <person name="Kazanov M.D."/>
            <person name="Malko D.B."/>
            <person name="Vitreschak A.G."/>
            <person name="Sernova N.V."/>
            <person name="Gelfand M.S."/>
            <person name="Demina I.A."/>
            <person name="Serebryakova M.V."/>
            <person name="Galyamina M.A."/>
            <person name="Vtyurin N.N."/>
            <person name="Rogov S.I."/>
            <person name="Alexeev D.G."/>
            <person name="Ladygina V.G."/>
            <person name="Govorun V.M."/>
        </authorList>
    </citation>
    <scope>NUCLEOTIDE SEQUENCE [LARGE SCALE GENOMIC DNA]</scope>
    <source>
        <strain>PG-8A</strain>
    </source>
</reference>
<accession>A9NGW7</accession>
<protein>
    <recommendedName>
        <fullName evidence="1">ATP synthase subunit c</fullName>
    </recommendedName>
    <alternativeName>
        <fullName evidence="1">ATP synthase F(0) sector subunit c</fullName>
    </alternativeName>
    <alternativeName>
        <fullName evidence="1">F-type ATPase subunit c</fullName>
        <shortName evidence="1">F-ATPase subunit c</shortName>
    </alternativeName>
    <alternativeName>
        <fullName evidence="1">Lipid-binding protein</fullName>
    </alternativeName>
</protein>
<proteinExistence type="inferred from homology"/>
<name>ATPL_ACHLI</name>
<feature type="chain" id="PRO_0000365840" description="ATP synthase subunit c">
    <location>
        <begin position="1"/>
        <end position="86"/>
    </location>
</feature>
<feature type="transmembrane region" description="Helical" evidence="1">
    <location>
        <begin position="13"/>
        <end position="33"/>
    </location>
</feature>
<feature type="transmembrane region" description="Helical" evidence="1">
    <location>
        <begin position="63"/>
        <end position="83"/>
    </location>
</feature>
<feature type="site" description="Reversibly protonated during proton transport" evidence="1">
    <location>
        <position position="70"/>
    </location>
</feature>
<gene>
    <name evidence="1" type="primary">atpE</name>
    <name type="ordered locus">ACL_0987</name>
</gene>
<comment type="function">
    <text evidence="1">F(1)F(0) ATP synthase produces ATP from ADP in the presence of a proton or sodium gradient. F-type ATPases consist of two structural domains, F(1) containing the extramembraneous catalytic core and F(0) containing the membrane proton channel, linked together by a central stalk and a peripheral stalk. During catalysis, ATP synthesis in the catalytic domain of F(1) is coupled via a rotary mechanism of the central stalk subunits to proton translocation.</text>
</comment>
<comment type="function">
    <text evidence="1">Key component of the F(0) channel; it plays a direct role in translocation across the membrane. A homomeric c-ring of between 10-14 subunits forms the central stalk rotor element with the F(1) delta and epsilon subunits.</text>
</comment>
<comment type="subunit">
    <text evidence="1">F-type ATPases have 2 components, F(1) - the catalytic core - and F(0) - the membrane proton channel. F(1) has five subunits: alpha(3), beta(3), gamma(1), delta(1), epsilon(1). F(0) has three main subunits: a(1), b(2) and c(10-14). The alpha and beta chains form an alternating ring which encloses part of the gamma chain. F(1) is attached to F(0) by a central stalk formed by the gamma and epsilon chains, while a peripheral stalk is formed by the delta and b chains.</text>
</comment>
<comment type="subcellular location">
    <subcellularLocation>
        <location evidence="1">Cell membrane</location>
        <topology evidence="1">Multi-pass membrane protein</topology>
    </subcellularLocation>
</comment>
<comment type="similarity">
    <text evidence="1">Belongs to the ATPase C chain family.</text>
</comment>
<evidence type="ECO:0000255" key="1">
    <source>
        <dbReference type="HAMAP-Rule" id="MF_01396"/>
    </source>
</evidence>